<name>TAL_BUCAT</name>
<gene>
    <name evidence="2" type="primary">tal</name>
    <name type="ordered locus">BUAPTUC7_092</name>
</gene>
<accession>B8D6Z9</accession>
<evidence type="ECO:0000250" key="1"/>
<evidence type="ECO:0000255" key="2">
    <source>
        <dbReference type="HAMAP-Rule" id="MF_00492"/>
    </source>
</evidence>
<comment type="function">
    <text evidence="2">Transaldolase is important for the balance of metabolites in the pentose-phosphate pathway.</text>
</comment>
<comment type="catalytic activity">
    <reaction evidence="2">
        <text>D-sedoheptulose 7-phosphate + D-glyceraldehyde 3-phosphate = D-erythrose 4-phosphate + beta-D-fructose 6-phosphate</text>
        <dbReference type="Rhea" id="RHEA:17053"/>
        <dbReference type="ChEBI" id="CHEBI:16897"/>
        <dbReference type="ChEBI" id="CHEBI:57483"/>
        <dbReference type="ChEBI" id="CHEBI:57634"/>
        <dbReference type="ChEBI" id="CHEBI:59776"/>
        <dbReference type="EC" id="2.2.1.2"/>
    </reaction>
</comment>
<comment type="pathway">
    <text evidence="2">Carbohydrate degradation; pentose phosphate pathway; D-glyceraldehyde 3-phosphate and beta-D-fructose 6-phosphate from D-ribose 5-phosphate and D-xylulose 5-phosphate (non-oxidative stage): step 2/3.</text>
</comment>
<comment type="subunit">
    <text evidence="1">Homodimer.</text>
</comment>
<comment type="subcellular location">
    <subcellularLocation>
        <location evidence="2">Cytoplasm</location>
    </subcellularLocation>
</comment>
<comment type="similarity">
    <text evidence="2">Belongs to the transaldolase family. Type 1 subfamily.</text>
</comment>
<organism>
    <name type="scientific">Buchnera aphidicola subsp. Acyrthosiphon pisum (strain Tuc7)</name>
    <dbReference type="NCBI Taxonomy" id="561501"/>
    <lineage>
        <taxon>Bacteria</taxon>
        <taxon>Pseudomonadati</taxon>
        <taxon>Pseudomonadota</taxon>
        <taxon>Gammaproteobacteria</taxon>
        <taxon>Enterobacterales</taxon>
        <taxon>Erwiniaceae</taxon>
        <taxon>Buchnera</taxon>
    </lineage>
</organism>
<feature type="chain" id="PRO_1000198452" description="Transaldolase">
    <location>
        <begin position="1"/>
        <end position="316"/>
    </location>
</feature>
<feature type="active site" description="Schiff-base intermediate with substrate" evidence="2">
    <location>
        <position position="131"/>
    </location>
</feature>
<sequence length="316" mass="35564">MNQLSALKQFSIIVADTSDIKSICKYQPEDATTNPSLILQAVSSNTNQNFVDQAVQYAKKKGGLYKDQIINASDKILVDLGIEILKKIPGYISSEVDARLSFSTEASILKAKKIIDLYEEQGISRNRVLIKLAATWECIKAAEELKKDSILCNLTLLFSFAQARACAESNVFLISPFVGRIYDWYISQNLLSKSFLGKDPGVISVCKIYEYYKKYGYKTIIMGASFRNIQQILYLSGCDRLTISPVLLKELESNTAKIDRNLAPPSFISVPPVALSEEEFRWEHNQDAMAVQKLSDGIRNFGKDQLRLEKIFSKKI</sequence>
<protein>
    <recommendedName>
        <fullName evidence="2">Transaldolase</fullName>
        <ecNumber evidence="2">2.2.1.2</ecNumber>
    </recommendedName>
</protein>
<keyword id="KW-0963">Cytoplasm</keyword>
<keyword id="KW-0570">Pentose shunt</keyword>
<keyword id="KW-0704">Schiff base</keyword>
<keyword id="KW-0808">Transferase</keyword>
<reference key="1">
    <citation type="journal article" date="2009" name="Science">
        <title>The dynamics and time scale of ongoing genomic erosion in symbiotic bacteria.</title>
        <authorList>
            <person name="Moran N.A."/>
            <person name="McLaughlin H.J."/>
            <person name="Sorek R."/>
        </authorList>
    </citation>
    <scope>NUCLEOTIDE SEQUENCE [LARGE SCALE GENOMIC DNA]</scope>
    <source>
        <strain>Tuc7</strain>
    </source>
</reference>
<dbReference type="EC" id="2.2.1.2" evidence="2"/>
<dbReference type="EMBL" id="CP001158">
    <property type="protein sequence ID" value="ACL29914.1"/>
    <property type="molecule type" value="Genomic_DNA"/>
</dbReference>
<dbReference type="RefSeq" id="WP_009874046.1">
    <property type="nucleotide sequence ID" value="NC_011834.1"/>
</dbReference>
<dbReference type="SMR" id="B8D6Z9"/>
<dbReference type="KEGG" id="bau:BUAPTUC7_092"/>
<dbReference type="HOGENOM" id="CLU_047470_0_1_6"/>
<dbReference type="UniPathway" id="UPA00115">
    <property type="reaction ID" value="UER00414"/>
</dbReference>
<dbReference type="GO" id="GO:0005829">
    <property type="term" value="C:cytosol"/>
    <property type="evidence" value="ECO:0007669"/>
    <property type="project" value="TreeGrafter"/>
</dbReference>
<dbReference type="GO" id="GO:0004801">
    <property type="term" value="F:transaldolase activity"/>
    <property type="evidence" value="ECO:0000250"/>
    <property type="project" value="UniProtKB"/>
</dbReference>
<dbReference type="GO" id="GO:0005975">
    <property type="term" value="P:carbohydrate metabolic process"/>
    <property type="evidence" value="ECO:0007669"/>
    <property type="project" value="InterPro"/>
</dbReference>
<dbReference type="GO" id="GO:0006098">
    <property type="term" value="P:pentose-phosphate shunt"/>
    <property type="evidence" value="ECO:0007669"/>
    <property type="project" value="UniProtKB-UniRule"/>
</dbReference>
<dbReference type="CDD" id="cd00957">
    <property type="entry name" value="Transaldolase_TalAB"/>
    <property type="match status" value="1"/>
</dbReference>
<dbReference type="FunFam" id="3.20.20.70:FF:000131">
    <property type="entry name" value="Transaldolase"/>
    <property type="match status" value="1"/>
</dbReference>
<dbReference type="Gene3D" id="3.20.20.70">
    <property type="entry name" value="Aldolase class I"/>
    <property type="match status" value="1"/>
</dbReference>
<dbReference type="HAMAP" id="MF_00492">
    <property type="entry name" value="Transaldolase_1"/>
    <property type="match status" value="1"/>
</dbReference>
<dbReference type="InterPro" id="IPR013785">
    <property type="entry name" value="Aldolase_TIM"/>
</dbReference>
<dbReference type="InterPro" id="IPR001585">
    <property type="entry name" value="TAL/FSA"/>
</dbReference>
<dbReference type="InterPro" id="IPR004730">
    <property type="entry name" value="Transaldolase_1"/>
</dbReference>
<dbReference type="InterPro" id="IPR018225">
    <property type="entry name" value="Transaldolase_AS"/>
</dbReference>
<dbReference type="NCBIfam" id="NF009001">
    <property type="entry name" value="PRK12346.1"/>
    <property type="match status" value="1"/>
</dbReference>
<dbReference type="NCBIfam" id="TIGR00874">
    <property type="entry name" value="talAB"/>
    <property type="match status" value="1"/>
</dbReference>
<dbReference type="PANTHER" id="PTHR10683">
    <property type="entry name" value="TRANSALDOLASE"/>
    <property type="match status" value="1"/>
</dbReference>
<dbReference type="PANTHER" id="PTHR10683:SF16">
    <property type="entry name" value="TRANSALDOLASE A"/>
    <property type="match status" value="1"/>
</dbReference>
<dbReference type="Pfam" id="PF00923">
    <property type="entry name" value="TAL_FSA"/>
    <property type="match status" value="1"/>
</dbReference>
<dbReference type="SUPFAM" id="SSF51569">
    <property type="entry name" value="Aldolase"/>
    <property type="match status" value="1"/>
</dbReference>
<dbReference type="PROSITE" id="PS01054">
    <property type="entry name" value="TRANSALDOLASE_1"/>
    <property type="match status" value="1"/>
</dbReference>
<dbReference type="PROSITE" id="PS00958">
    <property type="entry name" value="TRANSALDOLASE_2"/>
    <property type="match status" value="1"/>
</dbReference>
<proteinExistence type="inferred from homology"/>